<sequence length="445" mass="51850">MLETSQTIPELVSWAKEREFSLNLPTERLAFLLAIAIYNAERFDGEMVESDLVDIFRHVSNEFEQSKETIATRANNAINELVKQRFLNRFSSEFTESLSIYRLTPLGVGVSDYYIRQREFSALRLSVQLAIVANEIQRASELAEEGTAKQEDEYYWRRNVFAPLKYSVAEIFDSIDLSQRIMDENQQSIKEEIAELLTKDWQAAIASCERLLDETSGNLRELQDTLNAAGDKLQEQLLRIQDCVIGRDDLYFIDQLITDLQAKLDRIISWGQQAIDLWIGYDRHVHKFIRTAIDMDKNRVFSQRLRQSIHNYFDMPWYLWTAQAERLIDLRDEELALRDEDALGELPEELEYEQLSDLHDQIVDYMQNLLIAQRERNQPIDLSLVLKEQLEGYPLARHFDVARIIVDQAVRLGMASADLSGTYPQWQEINNRGAEVQAHVIDEYK</sequence>
<gene>
    <name evidence="1" type="primary">mukF</name>
    <name type="ordered locus">MS1086</name>
</gene>
<accession>Q65TL7</accession>
<protein>
    <recommendedName>
        <fullName evidence="1">Chromosome partition protein MukF</fullName>
    </recommendedName>
</protein>
<dbReference type="EMBL" id="AE016827">
    <property type="protein sequence ID" value="AAU37693.1"/>
    <property type="molecule type" value="Genomic_DNA"/>
</dbReference>
<dbReference type="RefSeq" id="WP_011200261.1">
    <property type="nucleotide sequence ID" value="NC_006300.1"/>
</dbReference>
<dbReference type="SMR" id="Q65TL7"/>
<dbReference type="STRING" id="221988.MS1086"/>
<dbReference type="KEGG" id="msu:MS1086"/>
<dbReference type="eggNOG" id="COG3006">
    <property type="taxonomic scope" value="Bacteria"/>
</dbReference>
<dbReference type="HOGENOM" id="CLU_049853_0_0_6"/>
<dbReference type="OrthoDB" id="6450805at2"/>
<dbReference type="Proteomes" id="UP000000607">
    <property type="component" value="Chromosome"/>
</dbReference>
<dbReference type="GO" id="GO:0005737">
    <property type="term" value="C:cytoplasm"/>
    <property type="evidence" value="ECO:0007669"/>
    <property type="project" value="UniProtKB-UniRule"/>
</dbReference>
<dbReference type="GO" id="GO:0009295">
    <property type="term" value="C:nucleoid"/>
    <property type="evidence" value="ECO:0007669"/>
    <property type="project" value="UniProtKB-SubCell"/>
</dbReference>
<dbReference type="GO" id="GO:0005509">
    <property type="term" value="F:calcium ion binding"/>
    <property type="evidence" value="ECO:0007669"/>
    <property type="project" value="UniProtKB-UniRule"/>
</dbReference>
<dbReference type="GO" id="GO:0051301">
    <property type="term" value="P:cell division"/>
    <property type="evidence" value="ECO:0007669"/>
    <property type="project" value="UniProtKB-KW"/>
</dbReference>
<dbReference type="GO" id="GO:0030261">
    <property type="term" value="P:chromosome condensation"/>
    <property type="evidence" value="ECO:0007669"/>
    <property type="project" value="UniProtKB-KW"/>
</dbReference>
<dbReference type="GO" id="GO:0007059">
    <property type="term" value="P:chromosome segregation"/>
    <property type="evidence" value="ECO:0007669"/>
    <property type="project" value="UniProtKB-UniRule"/>
</dbReference>
<dbReference type="GO" id="GO:0006260">
    <property type="term" value="P:DNA replication"/>
    <property type="evidence" value="ECO:0007669"/>
    <property type="project" value="UniProtKB-UniRule"/>
</dbReference>
<dbReference type="CDD" id="cd16337">
    <property type="entry name" value="MukF_C"/>
    <property type="match status" value="1"/>
</dbReference>
<dbReference type="Gene3D" id="1.20.58.590">
    <property type="entry name" value="Chromosome partition protein MukF, middle domain"/>
    <property type="match status" value="1"/>
</dbReference>
<dbReference type="Gene3D" id="1.10.225.40">
    <property type="entry name" value="MukF, C-terminal domain"/>
    <property type="match status" value="1"/>
</dbReference>
<dbReference type="Gene3D" id="1.10.10.10">
    <property type="entry name" value="Winged helix-like DNA-binding domain superfamily/Winged helix DNA-binding domain"/>
    <property type="match status" value="1"/>
</dbReference>
<dbReference type="HAMAP" id="MF_01803">
    <property type="entry name" value="MukF"/>
    <property type="match status" value="1"/>
</dbReference>
<dbReference type="InterPro" id="IPR005582">
    <property type="entry name" value="Chromosome_partition_MukF"/>
</dbReference>
<dbReference type="InterPro" id="IPR033441">
    <property type="entry name" value="MukF_C"/>
</dbReference>
<dbReference type="InterPro" id="IPR038198">
    <property type="entry name" value="MukF_C_sf"/>
</dbReference>
<dbReference type="InterPro" id="IPR033440">
    <property type="entry name" value="MukF_M"/>
</dbReference>
<dbReference type="InterPro" id="IPR036141">
    <property type="entry name" value="MukF_M_sp"/>
</dbReference>
<dbReference type="InterPro" id="IPR033439">
    <property type="entry name" value="MukF_WHTH"/>
</dbReference>
<dbReference type="InterPro" id="IPR036388">
    <property type="entry name" value="WH-like_DNA-bd_sf"/>
</dbReference>
<dbReference type="InterPro" id="IPR036390">
    <property type="entry name" value="WH_DNA-bd_sf"/>
</dbReference>
<dbReference type="NCBIfam" id="NF003615">
    <property type="entry name" value="PRK05260.1"/>
    <property type="match status" value="1"/>
</dbReference>
<dbReference type="Pfam" id="PF03882">
    <property type="entry name" value="KicB"/>
    <property type="match status" value="1"/>
</dbReference>
<dbReference type="Pfam" id="PF17193">
    <property type="entry name" value="MukF_C"/>
    <property type="match status" value="1"/>
</dbReference>
<dbReference type="Pfam" id="PF17192">
    <property type="entry name" value="MukF_M"/>
    <property type="match status" value="1"/>
</dbReference>
<dbReference type="PIRSF" id="PIRSF018282">
    <property type="entry name" value="MukF"/>
    <property type="match status" value="1"/>
</dbReference>
<dbReference type="SUPFAM" id="SSF140570">
    <property type="entry name" value="MukF C-terminal domain-like"/>
    <property type="match status" value="1"/>
</dbReference>
<dbReference type="SUPFAM" id="SSF46785">
    <property type="entry name" value="Winged helix' DNA-binding domain"/>
    <property type="match status" value="1"/>
</dbReference>
<reference key="1">
    <citation type="journal article" date="2004" name="Nat. Biotechnol.">
        <title>The genome sequence of the capnophilic rumen bacterium Mannheimia succiniciproducens.</title>
        <authorList>
            <person name="Hong S.H."/>
            <person name="Kim J.S."/>
            <person name="Lee S.Y."/>
            <person name="In Y.H."/>
            <person name="Choi S.S."/>
            <person name="Rih J.-K."/>
            <person name="Kim C.H."/>
            <person name="Jeong H."/>
            <person name="Hur C.G."/>
            <person name="Kim J.J."/>
        </authorList>
    </citation>
    <scope>NUCLEOTIDE SEQUENCE [LARGE SCALE GENOMIC DNA]</scope>
    <source>
        <strain>KCTC 0769BP / MBEL55E</strain>
    </source>
</reference>
<proteinExistence type="inferred from homology"/>
<organism>
    <name type="scientific">Mannheimia succiniciproducens (strain KCTC 0769BP / MBEL55E)</name>
    <dbReference type="NCBI Taxonomy" id="221988"/>
    <lineage>
        <taxon>Bacteria</taxon>
        <taxon>Pseudomonadati</taxon>
        <taxon>Pseudomonadota</taxon>
        <taxon>Gammaproteobacteria</taxon>
        <taxon>Pasteurellales</taxon>
        <taxon>Pasteurellaceae</taxon>
        <taxon>Basfia</taxon>
    </lineage>
</organism>
<keyword id="KW-0106">Calcium</keyword>
<keyword id="KW-0131">Cell cycle</keyword>
<keyword id="KW-0132">Cell division</keyword>
<keyword id="KW-0159">Chromosome partition</keyword>
<keyword id="KW-0963">Cytoplasm</keyword>
<keyword id="KW-0226">DNA condensation</keyword>
<feature type="chain" id="PRO_1000069936" description="Chromosome partition protein MukF">
    <location>
        <begin position="1"/>
        <end position="445"/>
    </location>
</feature>
<feature type="region of interest" description="Leucine-zipper">
    <location>
        <begin position="212"/>
        <end position="240"/>
    </location>
</feature>
<evidence type="ECO:0000255" key="1">
    <source>
        <dbReference type="HAMAP-Rule" id="MF_01803"/>
    </source>
</evidence>
<name>MUKF_MANSM</name>
<comment type="function">
    <text evidence="1">Involved in chromosome condensation, segregation and cell cycle progression. May participate in facilitating chromosome segregation by condensation DNA from both sides of a centrally located replisome during cell division. Not required for mini-F plasmid partitioning. Probably acts via its interaction with MukB and MukE. Overexpression results in anucleate cells. It has a calcium binding activity.</text>
</comment>
<comment type="subunit">
    <text evidence="1">Interacts, and probably forms a ternary complex, with MukE and MukB via its C-terminal region. The complex formation is stimulated by calcium or magnesium. It is required for an interaction between MukE and MukB.</text>
</comment>
<comment type="subcellular location">
    <subcellularLocation>
        <location evidence="1">Cytoplasm</location>
        <location evidence="1">Nucleoid</location>
    </subcellularLocation>
    <text evidence="1">Restricted to the nucleoid region.</text>
</comment>
<comment type="similarity">
    <text evidence="1">Belongs to the MukF family.</text>
</comment>